<accession>Q0VHD6</accession>
<sequence length="550" mass="63755">MENQSLTFVGDEEAKVRKSTKFHPSIWGDYFIQNSSLSHAEESTQRMIKRVEELKVQVKSMFKDTSDILQLMNLIDSIQMLGLDYHFENEIDKALRLINEVDDKSYGLYETSLRFRLLRQHGNHVSTDIFNKFKGDNGSFISSLNGDAKGLLSLYNASYLGTHGETILDEAKSFAKPQLISLLSELEQSLAAQVTLFLELPLHKRVKILLVRKYILIYQEGAMRNNVLLEFAKLNFNLLQSLYQEELKKISIWWYDLALAKSLSFTRDRIVECYYWVLTLYFDPQYSHSRLIYSKVISLVSIMDDIYDNYGTLEECRQLTEAIKRWKPQAIDSLPEYLKYFYLKLLKTFEEIGEELEHNEKYRMLYLQDQIKAIAVAYLEEAKWSIERHVPSLDEHLHYSLITSGCSLVPCASYVGMGEVATKEVFDWHSSFPKAVEACCAIGRILNDITSYEREQGRGDNASTVESYMKDHGTNEKDACKKLQEIVEKAWKDLNQESLNQKNISRLIIERLVNFSRSMEEIYMSNDMYTNSGTKMKGNITLVLVEAFPV</sequence>
<proteinExistence type="evidence at protein level"/>
<feature type="chain" id="PRO_0000413960" description="(+)-germacrene D synthase">
    <location>
        <begin position="1"/>
        <end position="550"/>
    </location>
</feature>
<feature type="short sequence motif" description="DDXXD motif">
    <location>
        <begin position="304"/>
        <end position="308"/>
    </location>
</feature>
<feature type="binding site" evidence="1">
    <location>
        <position position="304"/>
    </location>
    <ligand>
        <name>Mg(2+)</name>
        <dbReference type="ChEBI" id="CHEBI:18420"/>
        <label>1</label>
    </ligand>
</feature>
<feature type="binding site" evidence="1">
    <location>
        <position position="304"/>
    </location>
    <ligand>
        <name>Mg(2+)</name>
        <dbReference type="ChEBI" id="CHEBI:18420"/>
        <label>2</label>
    </ligand>
</feature>
<feature type="binding site" evidence="1">
    <location>
        <position position="308"/>
    </location>
    <ligand>
        <name>Mg(2+)</name>
        <dbReference type="ChEBI" id="CHEBI:18420"/>
        <label>1</label>
    </ligand>
</feature>
<feature type="binding site" evidence="1">
    <location>
        <position position="308"/>
    </location>
    <ligand>
        <name>Mg(2+)</name>
        <dbReference type="ChEBI" id="CHEBI:18420"/>
        <label>2</label>
    </ligand>
</feature>
<feature type="binding site" evidence="1">
    <location>
        <position position="455"/>
    </location>
    <ligand>
        <name>Mg(2+)</name>
        <dbReference type="ChEBI" id="CHEBI:18420"/>
        <label>3</label>
    </ligand>
</feature>
<reference key="1">
    <citation type="journal article" date="2006" name="Arch. Biochem. Biophys.">
        <title>Cloning, expression, purification and characterization of recombinant (+)-germacrene D synthase from Zingiber officinale.</title>
        <authorList>
            <person name="Picaud S."/>
            <person name="Olsson M.E."/>
            <person name="Brodelius M."/>
            <person name="Brodelius P.E."/>
        </authorList>
    </citation>
    <scope>NUCLEOTIDE SEQUENCE [MRNA]</scope>
    <scope>FUNCTION</scope>
    <scope>CATALYTIC ACTIVITY</scope>
    <scope>BIOPHYSICOCHEMICAL PROPERTIES</scope>
    <source>
        <tissue>Rhizome</tissue>
    </source>
</reference>
<name>TSGD1_ZINOF</name>
<protein>
    <recommendedName>
        <fullName>(+)-germacrene D synthase</fullName>
        <ecNumber>4.2.3.77</ecNumber>
    </recommendedName>
</protein>
<keyword id="KW-0963">Cytoplasm</keyword>
<keyword id="KW-0456">Lyase</keyword>
<keyword id="KW-0460">Magnesium</keyword>
<keyword id="KW-0479">Metal-binding</keyword>
<dbReference type="EC" id="4.2.3.77"/>
<dbReference type="EMBL" id="AY860846">
    <property type="protein sequence ID" value="AAX40665.1"/>
    <property type="molecule type" value="mRNA"/>
</dbReference>
<dbReference type="SMR" id="Q0VHD6"/>
<dbReference type="KEGG" id="ag:AAX40665"/>
<dbReference type="BioCyc" id="MetaCyc:MONOMER-13556"/>
<dbReference type="BRENDA" id="4.2.3.71">
    <property type="organism ID" value="6754"/>
</dbReference>
<dbReference type="BRENDA" id="4.2.3.77">
    <property type="organism ID" value="6754"/>
</dbReference>
<dbReference type="UniPathway" id="UPA00213"/>
<dbReference type="GO" id="GO:0005737">
    <property type="term" value="C:cytoplasm"/>
    <property type="evidence" value="ECO:0007669"/>
    <property type="project" value="UniProtKB-SubCell"/>
</dbReference>
<dbReference type="GO" id="GO:0000287">
    <property type="term" value="F:magnesium ion binding"/>
    <property type="evidence" value="ECO:0007669"/>
    <property type="project" value="InterPro"/>
</dbReference>
<dbReference type="GO" id="GO:0010333">
    <property type="term" value="F:terpene synthase activity"/>
    <property type="evidence" value="ECO:0007669"/>
    <property type="project" value="InterPro"/>
</dbReference>
<dbReference type="GO" id="GO:0016102">
    <property type="term" value="P:diterpenoid biosynthetic process"/>
    <property type="evidence" value="ECO:0007669"/>
    <property type="project" value="InterPro"/>
</dbReference>
<dbReference type="CDD" id="cd00684">
    <property type="entry name" value="Terpene_cyclase_plant_C1"/>
    <property type="match status" value="1"/>
</dbReference>
<dbReference type="FunFam" id="1.10.600.10:FF:000007">
    <property type="entry name" value="Isoprene synthase, chloroplastic"/>
    <property type="match status" value="1"/>
</dbReference>
<dbReference type="FunFam" id="1.50.10.130:FF:000001">
    <property type="entry name" value="Isoprene synthase, chloroplastic"/>
    <property type="match status" value="1"/>
</dbReference>
<dbReference type="Gene3D" id="1.10.600.10">
    <property type="entry name" value="Farnesyl Diphosphate Synthase"/>
    <property type="match status" value="1"/>
</dbReference>
<dbReference type="Gene3D" id="1.50.10.130">
    <property type="entry name" value="Terpene synthase, N-terminal domain"/>
    <property type="match status" value="1"/>
</dbReference>
<dbReference type="InterPro" id="IPR008949">
    <property type="entry name" value="Isoprenoid_synthase_dom_sf"/>
</dbReference>
<dbReference type="InterPro" id="IPR034741">
    <property type="entry name" value="Terpene_cyclase-like_1_C"/>
</dbReference>
<dbReference type="InterPro" id="IPR044814">
    <property type="entry name" value="Terpene_cyclase_plant_C1"/>
</dbReference>
<dbReference type="InterPro" id="IPR001906">
    <property type="entry name" value="Terpene_synth_N"/>
</dbReference>
<dbReference type="InterPro" id="IPR036965">
    <property type="entry name" value="Terpene_synth_N_sf"/>
</dbReference>
<dbReference type="InterPro" id="IPR050148">
    <property type="entry name" value="Terpene_synthase-like"/>
</dbReference>
<dbReference type="InterPro" id="IPR005630">
    <property type="entry name" value="Terpene_synthase_metal-bd"/>
</dbReference>
<dbReference type="InterPro" id="IPR008930">
    <property type="entry name" value="Terpenoid_cyclase/PrenylTrfase"/>
</dbReference>
<dbReference type="PANTHER" id="PTHR31225:SF93">
    <property type="entry name" value="ALPHA-HUMULENE_(-)-(E)-BETA-CARYOPHYLLENE SYNTHASE"/>
    <property type="match status" value="1"/>
</dbReference>
<dbReference type="PANTHER" id="PTHR31225">
    <property type="entry name" value="OS04G0344100 PROTEIN-RELATED"/>
    <property type="match status" value="1"/>
</dbReference>
<dbReference type="Pfam" id="PF01397">
    <property type="entry name" value="Terpene_synth"/>
    <property type="match status" value="1"/>
</dbReference>
<dbReference type="Pfam" id="PF03936">
    <property type="entry name" value="Terpene_synth_C"/>
    <property type="match status" value="1"/>
</dbReference>
<dbReference type="SFLD" id="SFLDS00005">
    <property type="entry name" value="Isoprenoid_Synthase_Type_I"/>
    <property type="match status" value="1"/>
</dbReference>
<dbReference type="SFLD" id="SFLDG01019">
    <property type="entry name" value="Terpene_Cyclase_Like_1_C_Termi"/>
    <property type="match status" value="1"/>
</dbReference>
<dbReference type="SUPFAM" id="SSF48239">
    <property type="entry name" value="Terpenoid cyclases/Protein prenyltransferases"/>
    <property type="match status" value="1"/>
</dbReference>
<dbReference type="SUPFAM" id="SSF48576">
    <property type="entry name" value="Terpenoid synthases"/>
    <property type="match status" value="1"/>
</dbReference>
<comment type="function">
    <text evidence="2">Involved in the biosynthesis of germacrene D. Can use farnesyl diphosphate as substrate, but not geranyl diphosphate. Produces mainly (+)-germacrene D along with germacrene B and a number of minor by-products.</text>
</comment>
<comment type="catalytic activity">
    <reaction evidence="2">
        <text>(2E,6E)-farnesyl diphosphate = (+)-germacrene D + diphosphate</text>
        <dbReference type="Rhea" id="RHEA:30427"/>
        <dbReference type="ChEBI" id="CHEBI:33019"/>
        <dbReference type="ChEBI" id="CHEBI:49046"/>
        <dbReference type="ChEBI" id="CHEBI:175763"/>
        <dbReference type="EC" id="4.2.3.77"/>
    </reaction>
</comment>
<comment type="cofactor">
    <cofactor evidence="1">
        <name>Mg(2+)</name>
        <dbReference type="ChEBI" id="CHEBI:18420"/>
    </cofactor>
    <cofactor evidence="1">
        <name>Mn(2+)</name>
        <dbReference type="ChEBI" id="CHEBI:29035"/>
    </cofactor>
    <cofactor evidence="1">
        <name>Co(2+)</name>
        <dbReference type="ChEBI" id="CHEBI:48828"/>
    </cofactor>
    <cofactor evidence="1">
        <name>Ni(2+)</name>
        <dbReference type="ChEBI" id="CHEBI:49786"/>
    </cofactor>
    <text evidence="1">Magnesium, manganese, cobalt or nickel, but not zinc or copper. Binds 3 magnesium ions per subunit.</text>
</comment>
<comment type="biophysicochemical properties">
    <kinetics>
        <KM evidence="2">0.88 uM for (2E,6E)-farnesyl diphosphate (in presence of magnesium)</KM>
    </kinetics>
    <phDependence>
        <text evidence="2">Optimum pH is 7.5-8.5.</text>
    </phDependence>
</comment>
<comment type="pathway">
    <text>Secondary metabolite biosynthesis; terpenoid biosynthesis.</text>
</comment>
<comment type="subcellular location">
    <subcellularLocation>
        <location evidence="3">Cytoplasm</location>
    </subcellularLocation>
</comment>
<comment type="domain">
    <text evidence="1">The Asp-Asp-Xaa-Xaa-Asp/Glu (DDXXD/E) motif is important for the catalytic activity, presumably through binding to Mg(2+).</text>
</comment>
<comment type="similarity">
    <text evidence="3">Belongs to the terpene synthase family. Tpsa subfamily.</text>
</comment>
<organism>
    <name type="scientific">Zingiber officinale</name>
    <name type="common">Ginger</name>
    <name type="synonym">Amomum zingiber</name>
    <dbReference type="NCBI Taxonomy" id="94328"/>
    <lineage>
        <taxon>Eukaryota</taxon>
        <taxon>Viridiplantae</taxon>
        <taxon>Streptophyta</taxon>
        <taxon>Embryophyta</taxon>
        <taxon>Tracheophyta</taxon>
        <taxon>Spermatophyta</taxon>
        <taxon>Magnoliopsida</taxon>
        <taxon>Liliopsida</taxon>
        <taxon>Zingiberales</taxon>
        <taxon>Zingiberaceae</taxon>
        <taxon>Zingiber</taxon>
    </lineage>
</organism>
<evidence type="ECO:0000250" key="1"/>
<evidence type="ECO:0000269" key="2">
    <source>
    </source>
</evidence>
<evidence type="ECO:0000305" key="3"/>